<sequence>MNLPRAERLRSTPQRSLRDSDGEDGKIDVLGEEEDEDEEEAASQQFLEQSLQPGLQVARWGGVALPREHIEGGGGPSDPSEFGTEFRAPPRSAAASEDARQPAKPPSSYIALITMAILQSPHKRLTLSGICAFISDRFPYYRRKFPAWQNSIRHNLSLNDCFVKIPREPGRPGKGNYWSLDPASQDMFDNGSFLRRRKRFQRHQPTPGAHLPHPFPLPAAHAALHNPRPGPLLGAPAPPQPVPGAYPNTGPGRRPYALLHPHPPRYLLLSAPAYAGAPKKAEGADLATPAPFPCCSPHLVLSLGRRARVWRRHREADASLSALRVSCKGSGERVQGLRRVCPRPRGATAPCSSDRQACRTILQQQQRHQEEDCANGCAPTKGAVLGGHLSAASALLRYQAVAEGSGLTSLAAPLGGEGTSPVFLVSPTPSSLAESAGPS</sequence>
<keyword id="KW-0238">DNA-binding</keyword>
<keyword id="KW-0539">Nucleus</keyword>
<keyword id="KW-1185">Reference proteome</keyword>
<keyword id="KW-0804">Transcription</keyword>
<keyword id="KW-0805">Transcription regulation</keyword>
<protein>
    <recommendedName>
        <fullName>Forkhead box protein D4</fullName>
    </recommendedName>
    <alternativeName>
        <fullName>Forkhead-related protein FKHL9</fullName>
    </alternativeName>
    <alternativeName>
        <fullName>Forkhead-related transcription factor 5</fullName>
        <shortName>FREAC-5</shortName>
    </alternativeName>
    <alternativeName>
        <fullName>Myeloid factor-alpha</fullName>
    </alternativeName>
</protein>
<name>FOXD4_HUMAN</name>
<organism>
    <name type="scientific">Homo sapiens</name>
    <name type="common">Human</name>
    <dbReference type="NCBI Taxonomy" id="9606"/>
    <lineage>
        <taxon>Eukaryota</taxon>
        <taxon>Metazoa</taxon>
        <taxon>Chordata</taxon>
        <taxon>Craniata</taxon>
        <taxon>Vertebrata</taxon>
        <taxon>Euteleostomi</taxon>
        <taxon>Mammalia</taxon>
        <taxon>Eutheria</taxon>
        <taxon>Euarchontoglires</taxon>
        <taxon>Primates</taxon>
        <taxon>Haplorrhini</taxon>
        <taxon>Catarrhini</taxon>
        <taxon>Hominidae</taxon>
        <taxon>Homo</taxon>
    </lineage>
</organism>
<proteinExistence type="evidence at protein level"/>
<feature type="chain" id="PRO_0000091821" description="Forkhead box protein D4">
    <location>
        <begin position="1"/>
        <end position="439"/>
    </location>
</feature>
<feature type="DNA-binding region" description="Fork-head" evidence="1">
    <location>
        <begin position="104"/>
        <end position="198"/>
    </location>
</feature>
<feature type="region of interest" description="Disordered" evidence="2">
    <location>
        <begin position="1"/>
        <end position="46"/>
    </location>
</feature>
<feature type="region of interest" description="Disordered" evidence="2">
    <location>
        <begin position="62"/>
        <end position="104"/>
    </location>
</feature>
<feature type="region of interest" description="Disordered" evidence="2">
    <location>
        <begin position="204"/>
        <end position="232"/>
    </location>
</feature>
<feature type="compositionally biased region" description="Basic and acidic residues" evidence="2">
    <location>
        <begin position="1"/>
        <end position="29"/>
    </location>
</feature>
<feature type="compositionally biased region" description="Acidic residues" evidence="2">
    <location>
        <begin position="30"/>
        <end position="41"/>
    </location>
</feature>
<feature type="compositionally biased region" description="Low complexity" evidence="2">
    <location>
        <begin position="218"/>
        <end position="232"/>
    </location>
</feature>
<feature type="sequence variant" id="VAR_028177" description="In dbSNP:rs10959293.">
    <original>I</original>
    <variation>F</variation>
    <location>
        <position position="134"/>
    </location>
</feature>
<feature type="sequence variant" id="VAR_028178" description="In dbSNP:rs2492216." evidence="3">
    <original>D</original>
    <variation>G</variation>
    <location>
        <position position="136"/>
    </location>
</feature>
<feature type="sequence variant" id="VAR_028179" description="In dbSNP:rs7031810." evidence="3">
    <original>I</original>
    <variation>V</variation>
    <location>
        <position position="152"/>
    </location>
</feature>
<reference key="1">
    <citation type="journal article" date="2002" name="Gene">
        <title>FOXD4a and FOXD4b, two new winged helix transcription factors, are expressed in human leukemia cell lines.</title>
        <authorList>
            <person name="Freyaldenhoven B.S."/>
            <person name="Fried C."/>
            <person name="Wielckens K."/>
        </authorList>
    </citation>
    <scope>NUCLEOTIDE SEQUENCE [GENOMIC DNA]</scope>
    <scope>VARIANTS GLY-136 AND VAL-152</scope>
</reference>
<reference key="2">
    <citation type="journal article" date="2004" name="Nature">
        <title>DNA sequence and analysis of human chromosome 9.</title>
        <authorList>
            <person name="Humphray S.J."/>
            <person name="Oliver K."/>
            <person name="Hunt A.R."/>
            <person name="Plumb R.W."/>
            <person name="Loveland J.E."/>
            <person name="Howe K.L."/>
            <person name="Andrews T.D."/>
            <person name="Searle S."/>
            <person name="Hunt S.E."/>
            <person name="Scott C.E."/>
            <person name="Jones M.C."/>
            <person name="Ainscough R."/>
            <person name="Almeida J.P."/>
            <person name="Ambrose K.D."/>
            <person name="Ashwell R.I.S."/>
            <person name="Babbage A.K."/>
            <person name="Babbage S."/>
            <person name="Bagguley C.L."/>
            <person name="Bailey J."/>
            <person name="Banerjee R."/>
            <person name="Barker D.J."/>
            <person name="Barlow K.F."/>
            <person name="Bates K."/>
            <person name="Beasley H."/>
            <person name="Beasley O."/>
            <person name="Bird C.P."/>
            <person name="Bray-Allen S."/>
            <person name="Brown A.J."/>
            <person name="Brown J.Y."/>
            <person name="Burford D."/>
            <person name="Burrill W."/>
            <person name="Burton J."/>
            <person name="Carder C."/>
            <person name="Carter N.P."/>
            <person name="Chapman J.C."/>
            <person name="Chen Y."/>
            <person name="Clarke G."/>
            <person name="Clark S.Y."/>
            <person name="Clee C.M."/>
            <person name="Clegg S."/>
            <person name="Collier R.E."/>
            <person name="Corby N."/>
            <person name="Crosier M."/>
            <person name="Cummings A.T."/>
            <person name="Davies J."/>
            <person name="Dhami P."/>
            <person name="Dunn M."/>
            <person name="Dutta I."/>
            <person name="Dyer L.W."/>
            <person name="Earthrowl M.E."/>
            <person name="Faulkner L."/>
            <person name="Fleming C.J."/>
            <person name="Frankish A."/>
            <person name="Frankland J.A."/>
            <person name="French L."/>
            <person name="Fricker D.G."/>
            <person name="Garner P."/>
            <person name="Garnett J."/>
            <person name="Ghori J."/>
            <person name="Gilbert J.G.R."/>
            <person name="Glison C."/>
            <person name="Grafham D.V."/>
            <person name="Gribble S."/>
            <person name="Griffiths C."/>
            <person name="Griffiths-Jones S."/>
            <person name="Grocock R."/>
            <person name="Guy J."/>
            <person name="Hall R.E."/>
            <person name="Hammond S."/>
            <person name="Harley J.L."/>
            <person name="Harrison E.S.I."/>
            <person name="Hart E.A."/>
            <person name="Heath P.D."/>
            <person name="Henderson C.D."/>
            <person name="Hopkins B.L."/>
            <person name="Howard P.J."/>
            <person name="Howden P.J."/>
            <person name="Huckle E."/>
            <person name="Johnson C."/>
            <person name="Johnson D."/>
            <person name="Joy A.A."/>
            <person name="Kay M."/>
            <person name="Keenan S."/>
            <person name="Kershaw J.K."/>
            <person name="Kimberley A.M."/>
            <person name="King A."/>
            <person name="Knights A."/>
            <person name="Laird G.K."/>
            <person name="Langford C."/>
            <person name="Lawlor S."/>
            <person name="Leongamornlert D.A."/>
            <person name="Leversha M."/>
            <person name="Lloyd C."/>
            <person name="Lloyd D.M."/>
            <person name="Lovell J."/>
            <person name="Martin S."/>
            <person name="Mashreghi-Mohammadi M."/>
            <person name="Matthews L."/>
            <person name="McLaren S."/>
            <person name="McLay K.E."/>
            <person name="McMurray A."/>
            <person name="Milne S."/>
            <person name="Nickerson T."/>
            <person name="Nisbett J."/>
            <person name="Nordsiek G."/>
            <person name="Pearce A.V."/>
            <person name="Peck A.I."/>
            <person name="Porter K.M."/>
            <person name="Pandian R."/>
            <person name="Pelan S."/>
            <person name="Phillimore B."/>
            <person name="Povey S."/>
            <person name="Ramsey Y."/>
            <person name="Rand V."/>
            <person name="Scharfe M."/>
            <person name="Sehra H.K."/>
            <person name="Shownkeen R."/>
            <person name="Sims S.K."/>
            <person name="Skuce C.D."/>
            <person name="Smith M."/>
            <person name="Steward C.A."/>
            <person name="Swarbreck D."/>
            <person name="Sycamore N."/>
            <person name="Tester J."/>
            <person name="Thorpe A."/>
            <person name="Tracey A."/>
            <person name="Tromans A."/>
            <person name="Thomas D.W."/>
            <person name="Wall M."/>
            <person name="Wallis J.M."/>
            <person name="West A.P."/>
            <person name="Whitehead S.L."/>
            <person name="Willey D.L."/>
            <person name="Williams S.A."/>
            <person name="Wilming L."/>
            <person name="Wray P.W."/>
            <person name="Young L."/>
            <person name="Ashurst J.L."/>
            <person name="Coulson A."/>
            <person name="Blocker H."/>
            <person name="Durbin R.M."/>
            <person name="Sulston J.E."/>
            <person name="Hubbard T."/>
            <person name="Jackson M.J."/>
            <person name="Bentley D.R."/>
            <person name="Beck S."/>
            <person name="Rogers J."/>
            <person name="Dunham I."/>
        </authorList>
    </citation>
    <scope>NUCLEOTIDE SEQUENCE [LARGE SCALE GENOMIC DNA]</scope>
</reference>
<reference key="3">
    <citation type="journal article" date="2004" name="Genome Res.">
        <title>The status, quality, and expansion of the NIH full-length cDNA project: the Mammalian Gene Collection (MGC).</title>
        <authorList>
            <consortium name="The MGC Project Team"/>
        </authorList>
    </citation>
    <scope>NUCLEOTIDE SEQUENCE [LARGE SCALE MRNA]</scope>
    <source>
        <tissue>Chondrosarcoma</tissue>
        <tissue>Testis</tissue>
    </source>
</reference>
<reference key="4">
    <citation type="journal article" date="1994" name="EMBO J.">
        <title>Cloning and characterization of seven human forkhead proteins: binding site specificity and DNA bending.</title>
        <authorList>
            <person name="Pierrou S."/>
            <person name="Hellqvist M."/>
            <person name="Samuelsson L."/>
            <person name="Enerbaeck S."/>
            <person name="Carlsson P."/>
        </authorList>
    </citation>
    <scope>NUCLEOTIDE SEQUENCE [MRNA] OF 99-204</scope>
</reference>
<reference key="5">
    <citation type="journal article" date="2002" name="Genome Res.">
        <title>Gene content and function of the ancestral chromosome fusion site in human chromosome 2q13-2q14.1 and paralogous regions.</title>
        <authorList>
            <person name="Fan Y."/>
            <person name="Newman T."/>
            <person name="Linardopoulou E."/>
            <person name="Trask B.J."/>
        </authorList>
    </citation>
    <scope>NUCLEOTIDE SEQUENCE [MRNA] OF 242-413</scope>
    <source>
        <tissue>Heart</tissue>
    </source>
</reference>
<evidence type="ECO:0000255" key="1">
    <source>
        <dbReference type="PROSITE-ProRule" id="PRU00089"/>
    </source>
</evidence>
<evidence type="ECO:0000256" key="2">
    <source>
        <dbReference type="SAM" id="MobiDB-lite"/>
    </source>
</evidence>
<evidence type="ECO:0000269" key="3">
    <source>
    </source>
</evidence>
<dbReference type="EMBL" id="AF343004">
    <property type="protein sequence ID" value="AAL73341.1"/>
    <property type="molecule type" value="Genomic_DNA"/>
</dbReference>
<dbReference type="EMBL" id="AL449043">
    <property type="status" value="NOT_ANNOTATED_CDS"/>
    <property type="molecule type" value="Genomic_DNA"/>
</dbReference>
<dbReference type="EMBL" id="BC089432">
    <property type="protein sequence ID" value="AAH89432.1"/>
    <property type="molecule type" value="mRNA"/>
</dbReference>
<dbReference type="EMBL" id="BC136570">
    <property type="protein sequence ID" value="AAI36571.1"/>
    <property type="molecule type" value="mRNA"/>
</dbReference>
<dbReference type="EMBL" id="BC136571">
    <property type="protein sequence ID" value="AAI36572.1"/>
    <property type="molecule type" value="mRNA"/>
</dbReference>
<dbReference type="EMBL" id="U13223">
    <property type="protein sequence ID" value="AAA92040.1"/>
    <property type="molecule type" value="mRNA"/>
</dbReference>
<dbReference type="EMBL" id="AF452724">
    <property type="protein sequence ID" value="AAN64909.1"/>
    <property type="molecule type" value="mRNA"/>
</dbReference>
<dbReference type="CCDS" id="CCDS34975.1"/>
<dbReference type="PIR" id="S51628">
    <property type="entry name" value="S51628"/>
</dbReference>
<dbReference type="RefSeq" id="NP_997188.2">
    <property type="nucleotide sequence ID" value="NM_207305.5"/>
</dbReference>
<dbReference type="SMR" id="Q12950"/>
<dbReference type="BioGRID" id="108587">
    <property type="interactions" value="62"/>
</dbReference>
<dbReference type="FunCoup" id="Q12950">
    <property type="interactions" value="28"/>
</dbReference>
<dbReference type="IntAct" id="Q12950">
    <property type="interactions" value="55"/>
</dbReference>
<dbReference type="MINT" id="Q12950"/>
<dbReference type="STRING" id="9606.ENSP00000371940"/>
<dbReference type="GlyGen" id="Q12950">
    <property type="glycosylation" value="2 sites"/>
</dbReference>
<dbReference type="iPTMnet" id="Q12950"/>
<dbReference type="PhosphoSitePlus" id="Q12950"/>
<dbReference type="BioMuta" id="FOXD4"/>
<dbReference type="DMDM" id="311033480"/>
<dbReference type="jPOST" id="Q12950"/>
<dbReference type="MassIVE" id="Q12950"/>
<dbReference type="PaxDb" id="9606-ENSP00000371940"/>
<dbReference type="PeptideAtlas" id="Q12950"/>
<dbReference type="Antibodypedia" id="8863">
    <property type="antibodies" value="181 antibodies from 26 providers"/>
</dbReference>
<dbReference type="DNASU" id="2298"/>
<dbReference type="Ensembl" id="ENST00000382500.4">
    <property type="protein sequence ID" value="ENSP00000371940.2"/>
    <property type="gene ID" value="ENSG00000170122.6"/>
</dbReference>
<dbReference type="GeneID" id="2298"/>
<dbReference type="KEGG" id="hsa:2298"/>
<dbReference type="MANE-Select" id="ENST00000382500.4">
    <property type="protein sequence ID" value="ENSP00000371940.2"/>
    <property type="RefSeq nucleotide sequence ID" value="NM_207305.5"/>
    <property type="RefSeq protein sequence ID" value="NP_997188.2"/>
</dbReference>
<dbReference type="UCSC" id="uc003zfz.5">
    <property type="organism name" value="human"/>
</dbReference>
<dbReference type="AGR" id="HGNC:3805"/>
<dbReference type="CTD" id="2298"/>
<dbReference type="DisGeNET" id="2298"/>
<dbReference type="GeneCards" id="FOXD4"/>
<dbReference type="HGNC" id="HGNC:3805">
    <property type="gene designation" value="FOXD4"/>
</dbReference>
<dbReference type="HPA" id="ENSG00000170122">
    <property type="expression patterns" value="Tissue enhanced (brain)"/>
</dbReference>
<dbReference type="MalaCards" id="FOXD4"/>
<dbReference type="MIM" id="601092">
    <property type="type" value="gene"/>
</dbReference>
<dbReference type="neXtProt" id="NX_Q12950"/>
<dbReference type="OpenTargets" id="ENSG00000170122"/>
<dbReference type="PharmGKB" id="PA28222"/>
<dbReference type="VEuPathDB" id="HostDB:ENSG00000170122"/>
<dbReference type="eggNOG" id="KOG2294">
    <property type="taxonomic scope" value="Eukaryota"/>
</dbReference>
<dbReference type="GeneTree" id="ENSGT00940000163353"/>
<dbReference type="HOGENOM" id="CLU_040357_3_1_1"/>
<dbReference type="InParanoid" id="Q12950"/>
<dbReference type="OMA" id="CRTILQQ"/>
<dbReference type="OrthoDB" id="9537367at2759"/>
<dbReference type="PAN-GO" id="Q12950">
    <property type="GO annotations" value="5 GO annotations based on evolutionary models"/>
</dbReference>
<dbReference type="PhylomeDB" id="Q12950"/>
<dbReference type="TreeFam" id="TF316127"/>
<dbReference type="PathwayCommons" id="Q12950"/>
<dbReference type="SignaLink" id="Q12950"/>
<dbReference type="BioGRID-ORCS" id="2298">
    <property type="hits" value="369 hits in 1072 CRISPR screens"/>
</dbReference>
<dbReference type="GeneWiki" id="FOXD4"/>
<dbReference type="GenomeRNAi" id="2298"/>
<dbReference type="Pharos" id="Q12950">
    <property type="development level" value="Tbio"/>
</dbReference>
<dbReference type="PRO" id="PR:Q12950"/>
<dbReference type="Proteomes" id="UP000005640">
    <property type="component" value="Chromosome 9"/>
</dbReference>
<dbReference type="RNAct" id="Q12950">
    <property type="molecule type" value="protein"/>
</dbReference>
<dbReference type="Bgee" id="ENSG00000170122">
    <property type="expression patterns" value="Expressed in cortical plate and 87 other cell types or tissues"/>
</dbReference>
<dbReference type="GO" id="GO:0000785">
    <property type="term" value="C:chromatin"/>
    <property type="evidence" value="ECO:0000247"/>
    <property type="project" value="NTNU_SB"/>
</dbReference>
<dbReference type="GO" id="GO:0005634">
    <property type="term" value="C:nucleus"/>
    <property type="evidence" value="ECO:0007669"/>
    <property type="project" value="UniProtKB-SubCell"/>
</dbReference>
<dbReference type="GO" id="GO:0008301">
    <property type="term" value="F:DNA binding, bending"/>
    <property type="evidence" value="ECO:0000250"/>
    <property type="project" value="UniProtKB"/>
</dbReference>
<dbReference type="GO" id="GO:0003700">
    <property type="term" value="F:DNA-binding transcription factor activity"/>
    <property type="evidence" value="ECO:0000304"/>
    <property type="project" value="UniProtKB"/>
</dbReference>
<dbReference type="GO" id="GO:0000981">
    <property type="term" value="F:DNA-binding transcription factor activity, RNA polymerase II-specific"/>
    <property type="evidence" value="ECO:0000247"/>
    <property type="project" value="NTNU_SB"/>
</dbReference>
<dbReference type="GO" id="GO:0000978">
    <property type="term" value="F:RNA polymerase II cis-regulatory region sequence-specific DNA binding"/>
    <property type="evidence" value="ECO:0000318"/>
    <property type="project" value="GO_Central"/>
</dbReference>
<dbReference type="GO" id="GO:0043565">
    <property type="term" value="F:sequence-specific DNA binding"/>
    <property type="evidence" value="ECO:0000250"/>
    <property type="project" value="UniProtKB"/>
</dbReference>
<dbReference type="GO" id="GO:0009653">
    <property type="term" value="P:anatomical structure morphogenesis"/>
    <property type="evidence" value="ECO:0000318"/>
    <property type="project" value="GO_Central"/>
</dbReference>
<dbReference type="GO" id="GO:0030154">
    <property type="term" value="P:cell differentiation"/>
    <property type="evidence" value="ECO:0000318"/>
    <property type="project" value="GO_Central"/>
</dbReference>
<dbReference type="GO" id="GO:0006357">
    <property type="term" value="P:regulation of transcription by RNA polymerase II"/>
    <property type="evidence" value="ECO:0000318"/>
    <property type="project" value="GO_Central"/>
</dbReference>
<dbReference type="CDD" id="cd20048">
    <property type="entry name" value="FH_FOXD4-like"/>
    <property type="match status" value="1"/>
</dbReference>
<dbReference type="FunFam" id="1.10.10.10:FF:000071">
    <property type="entry name" value="Forkhead box F1"/>
    <property type="match status" value="1"/>
</dbReference>
<dbReference type="Gene3D" id="1.10.10.10">
    <property type="entry name" value="Winged helix-like DNA-binding domain superfamily/Winged helix DNA-binding domain"/>
    <property type="match status" value="1"/>
</dbReference>
<dbReference type="InterPro" id="IPR001766">
    <property type="entry name" value="Fork_head_dom"/>
</dbReference>
<dbReference type="InterPro" id="IPR050211">
    <property type="entry name" value="FOX_domain-containing"/>
</dbReference>
<dbReference type="InterPro" id="IPR030456">
    <property type="entry name" value="TF_fork_head_CS_2"/>
</dbReference>
<dbReference type="InterPro" id="IPR036388">
    <property type="entry name" value="WH-like_DNA-bd_sf"/>
</dbReference>
<dbReference type="InterPro" id="IPR036390">
    <property type="entry name" value="WH_DNA-bd_sf"/>
</dbReference>
<dbReference type="PANTHER" id="PTHR11829">
    <property type="entry name" value="FORKHEAD BOX PROTEIN"/>
    <property type="match status" value="1"/>
</dbReference>
<dbReference type="PANTHER" id="PTHR11829:SF404">
    <property type="entry name" value="FORKHEAD BOX PROTEIN D4"/>
    <property type="match status" value="1"/>
</dbReference>
<dbReference type="Pfam" id="PF00250">
    <property type="entry name" value="Forkhead"/>
    <property type="match status" value="1"/>
</dbReference>
<dbReference type="PRINTS" id="PR00053">
    <property type="entry name" value="FORKHEAD"/>
</dbReference>
<dbReference type="SMART" id="SM00339">
    <property type="entry name" value="FH"/>
    <property type="match status" value="1"/>
</dbReference>
<dbReference type="SUPFAM" id="SSF46785">
    <property type="entry name" value="Winged helix' DNA-binding domain"/>
    <property type="match status" value="1"/>
</dbReference>
<dbReference type="PROSITE" id="PS00658">
    <property type="entry name" value="FORK_HEAD_2"/>
    <property type="match status" value="1"/>
</dbReference>
<dbReference type="PROSITE" id="PS50039">
    <property type="entry name" value="FORK_HEAD_3"/>
    <property type="match status" value="1"/>
</dbReference>
<accession>Q12950</accession>
<accession>B2RN05</accession>
<accession>B9EGL7</accession>
<accession>Q5VVK1</accession>
<accession>Q8WXT6</accession>
<gene>
    <name type="primary">FOXD4</name>
    <name type="synonym">FKHL9</name>
    <name type="synonym">FOXD4A</name>
    <name type="synonym">FREAC5</name>
</gene>
<comment type="interaction">
    <interactant intactId="EBI-11317801">
        <id>Q12950</id>
    </interactant>
    <interactant intactId="EBI-357530">
        <id>Q9ULX6</id>
        <label>AKAP8L</label>
    </interactant>
    <organismsDiffer>false</organismsDiffer>
    <experiments>3</experiments>
</comment>
<comment type="interaction">
    <interactant intactId="EBI-11317801">
        <id>Q12950</id>
    </interactant>
    <interactant intactId="EBI-12012928">
        <id>P60371</id>
        <label>KRTAP10-6</label>
    </interactant>
    <organismsDiffer>false</organismsDiffer>
    <experiments>3</experiments>
</comment>
<comment type="interaction">
    <interactant intactId="EBI-11317801">
        <id>Q12950</id>
    </interactant>
    <interactant intactId="EBI-10176379">
        <id>P59991</id>
        <label>KRTAP12-2</label>
    </interactant>
    <organismsDiffer>false</organismsDiffer>
    <experiments>3</experiments>
</comment>
<comment type="interaction">
    <interactant intactId="EBI-11317801">
        <id>Q12950</id>
    </interactant>
    <interactant intactId="EBI-724076">
        <id>Q99750</id>
        <label>MDFI</label>
    </interactant>
    <organismsDiffer>false</organismsDiffer>
    <experiments>3</experiments>
</comment>
<comment type="subcellular location">
    <subcellularLocation>
        <location>Nucleus</location>
    </subcellularLocation>
</comment>